<gene>
    <name evidence="1" type="primary">dnaJ</name>
    <name type="ordered locus">PD_1369</name>
</gene>
<protein>
    <recommendedName>
        <fullName evidence="1">Chaperone protein DnaJ</fullName>
    </recommendedName>
</protein>
<reference key="1">
    <citation type="journal article" date="2003" name="J. Bacteriol.">
        <title>Comparative analyses of the complete genome sequences of Pierce's disease and citrus variegated chlorosis strains of Xylella fastidiosa.</title>
        <authorList>
            <person name="Van Sluys M.A."/>
            <person name="de Oliveira M.C."/>
            <person name="Monteiro-Vitorello C.B."/>
            <person name="Miyaki C.Y."/>
            <person name="Furlan L.R."/>
            <person name="Camargo L.E.A."/>
            <person name="da Silva A.C.R."/>
            <person name="Moon D.H."/>
            <person name="Takita M.A."/>
            <person name="Lemos E.G.M."/>
            <person name="Machado M.A."/>
            <person name="Ferro M.I.T."/>
            <person name="da Silva F.R."/>
            <person name="Goldman M.H.S."/>
            <person name="Goldman G.H."/>
            <person name="Lemos M.V.F."/>
            <person name="El-Dorry H."/>
            <person name="Tsai S.M."/>
            <person name="Carrer H."/>
            <person name="Carraro D.M."/>
            <person name="de Oliveira R.C."/>
            <person name="Nunes L.R."/>
            <person name="Siqueira W.J."/>
            <person name="Coutinho L.L."/>
            <person name="Kimura E.T."/>
            <person name="Ferro E.S."/>
            <person name="Harakava R."/>
            <person name="Kuramae E.E."/>
            <person name="Marino C.L."/>
            <person name="Giglioti E."/>
            <person name="Abreu I.L."/>
            <person name="Alves L.M.C."/>
            <person name="do Amaral A.M."/>
            <person name="Baia G.S."/>
            <person name="Blanco S.R."/>
            <person name="Brito M.S."/>
            <person name="Cannavan F.S."/>
            <person name="Celestino A.V."/>
            <person name="da Cunha A.F."/>
            <person name="Fenille R.C."/>
            <person name="Ferro J.A."/>
            <person name="Formighieri E.F."/>
            <person name="Kishi L.T."/>
            <person name="Leoni S.G."/>
            <person name="Oliveira A.R."/>
            <person name="Rosa V.E. Jr."/>
            <person name="Sassaki F.T."/>
            <person name="Sena J.A.D."/>
            <person name="de Souza A.A."/>
            <person name="Truffi D."/>
            <person name="Tsukumo F."/>
            <person name="Yanai G.M."/>
            <person name="Zaros L.G."/>
            <person name="Civerolo E.L."/>
            <person name="Simpson A.J.G."/>
            <person name="Almeida N.F. Jr."/>
            <person name="Setubal J.C."/>
            <person name="Kitajima J.P."/>
        </authorList>
    </citation>
    <scope>NUCLEOTIDE SEQUENCE [LARGE SCALE GENOMIC DNA]</scope>
    <source>
        <strain>Temecula1 / ATCC 700964</strain>
    </source>
</reference>
<accession>Q87BS9</accession>
<proteinExistence type="inferred from homology"/>
<keyword id="KW-0143">Chaperone</keyword>
<keyword id="KW-0963">Cytoplasm</keyword>
<keyword id="KW-0235">DNA replication</keyword>
<keyword id="KW-0479">Metal-binding</keyword>
<keyword id="KW-1185">Reference proteome</keyword>
<keyword id="KW-0677">Repeat</keyword>
<keyword id="KW-0346">Stress response</keyword>
<keyword id="KW-0862">Zinc</keyword>
<keyword id="KW-0863">Zinc-finger</keyword>
<evidence type="ECO:0000255" key="1">
    <source>
        <dbReference type="HAMAP-Rule" id="MF_01152"/>
    </source>
</evidence>
<dbReference type="EMBL" id="AE009442">
    <property type="protein sequence ID" value="AAO29216.1"/>
    <property type="molecule type" value="Genomic_DNA"/>
</dbReference>
<dbReference type="RefSeq" id="WP_004091053.1">
    <property type="nucleotide sequence ID" value="NC_004556.1"/>
</dbReference>
<dbReference type="SMR" id="Q87BS9"/>
<dbReference type="DNASU" id="1144091"/>
<dbReference type="GeneID" id="93905186"/>
<dbReference type="KEGG" id="xft:PD_1369"/>
<dbReference type="HOGENOM" id="CLU_017633_0_7_6"/>
<dbReference type="Proteomes" id="UP000002516">
    <property type="component" value="Chromosome"/>
</dbReference>
<dbReference type="GO" id="GO:0005737">
    <property type="term" value="C:cytoplasm"/>
    <property type="evidence" value="ECO:0007669"/>
    <property type="project" value="UniProtKB-SubCell"/>
</dbReference>
<dbReference type="GO" id="GO:0005524">
    <property type="term" value="F:ATP binding"/>
    <property type="evidence" value="ECO:0007669"/>
    <property type="project" value="InterPro"/>
</dbReference>
<dbReference type="GO" id="GO:0031072">
    <property type="term" value="F:heat shock protein binding"/>
    <property type="evidence" value="ECO:0007669"/>
    <property type="project" value="InterPro"/>
</dbReference>
<dbReference type="GO" id="GO:0051082">
    <property type="term" value="F:unfolded protein binding"/>
    <property type="evidence" value="ECO:0007669"/>
    <property type="project" value="UniProtKB-UniRule"/>
</dbReference>
<dbReference type="GO" id="GO:0008270">
    <property type="term" value="F:zinc ion binding"/>
    <property type="evidence" value="ECO:0007669"/>
    <property type="project" value="UniProtKB-UniRule"/>
</dbReference>
<dbReference type="GO" id="GO:0051085">
    <property type="term" value="P:chaperone cofactor-dependent protein refolding"/>
    <property type="evidence" value="ECO:0007669"/>
    <property type="project" value="TreeGrafter"/>
</dbReference>
<dbReference type="GO" id="GO:0006260">
    <property type="term" value="P:DNA replication"/>
    <property type="evidence" value="ECO:0007669"/>
    <property type="project" value="UniProtKB-KW"/>
</dbReference>
<dbReference type="GO" id="GO:0042026">
    <property type="term" value="P:protein refolding"/>
    <property type="evidence" value="ECO:0007669"/>
    <property type="project" value="TreeGrafter"/>
</dbReference>
<dbReference type="GO" id="GO:0009408">
    <property type="term" value="P:response to heat"/>
    <property type="evidence" value="ECO:0007669"/>
    <property type="project" value="InterPro"/>
</dbReference>
<dbReference type="CDD" id="cd06257">
    <property type="entry name" value="DnaJ"/>
    <property type="match status" value="1"/>
</dbReference>
<dbReference type="CDD" id="cd10747">
    <property type="entry name" value="DnaJ_C"/>
    <property type="match status" value="1"/>
</dbReference>
<dbReference type="CDD" id="cd10719">
    <property type="entry name" value="DnaJ_zf"/>
    <property type="match status" value="1"/>
</dbReference>
<dbReference type="FunFam" id="2.10.230.10:FF:000002">
    <property type="entry name" value="Molecular chaperone DnaJ"/>
    <property type="match status" value="1"/>
</dbReference>
<dbReference type="FunFam" id="2.60.260.20:FF:000004">
    <property type="entry name" value="Molecular chaperone DnaJ"/>
    <property type="match status" value="1"/>
</dbReference>
<dbReference type="Gene3D" id="1.10.287.110">
    <property type="entry name" value="DnaJ domain"/>
    <property type="match status" value="1"/>
</dbReference>
<dbReference type="Gene3D" id="2.10.230.10">
    <property type="entry name" value="Heat shock protein DnaJ, cysteine-rich domain"/>
    <property type="match status" value="1"/>
</dbReference>
<dbReference type="Gene3D" id="2.60.260.20">
    <property type="entry name" value="Urease metallochaperone UreE, N-terminal domain"/>
    <property type="match status" value="2"/>
</dbReference>
<dbReference type="HAMAP" id="MF_01152">
    <property type="entry name" value="DnaJ"/>
    <property type="match status" value="1"/>
</dbReference>
<dbReference type="InterPro" id="IPR012724">
    <property type="entry name" value="DnaJ"/>
</dbReference>
<dbReference type="InterPro" id="IPR002939">
    <property type="entry name" value="DnaJ_C"/>
</dbReference>
<dbReference type="InterPro" id="IPR001623">
    <property type="entry name" value="DnaJ_domain"/>
</dbReference>
<dbReference type="InterPro" id="IPR008971">
    <property type="entry name" value="HSP40/DnaJ_pept-bd"/>
</dbReference>
<dbReference type="InterPro" id="IPR001305">
    <property type="entry name" value="HSP_DnaJ_Cys-rich_dom"/>
</dbReference>
<dbReference type="InterPro" id="IPR036410">
    <property type="entry name" value="HSP_DnaJ_Cys-rich_dom_sf"/>
</dbReference>
<dbReference type="InterPro" id="IPR036869">
    <property type="entry name" value="J_dom_sf"/>
</dbReference>
<dbReference type="NCBIfam" id="TIGR02349">
    <property type="entry name" value="DnaJ_bact"/>
    <property type="match status" value="1"/>
</dbReference>
<dbReference type="NCBIfam" id="NF008035">
    <property type="entry name" value="PRK10767.1"/>
    <property type="match status" value="1"/>
</dbReference>
<dbReference type="PANTHER" id="PTHR43096:SF48">
    <property type="entry name" value="CHAPERONE PROTEIN DNAJ"/>
    <property type="match status" value="1"/>
</dbReference>
<dbReference type="PANTHER" id="PTHR43096">
    <property type="entry name" value="DNAJ HOMOLOG 1, MITOCHONDRIAL-RELATED"/>
    <property type="match status" value="1"/>
</dbReference>
<dbReference type="Pfam" id="PF00226">
    <property type="entry name" value="DnaJ"/>
    <property type="match status" value="1"/>
</dbReference>
<dbReference type="Pfam" id="PF01556">
    <property type="entry name" value="DnaJ_C"/>
    <property type="match status" value="1"/>
</dbReference>
<dbReference type="Pfam" id="PF00684">
    <property type="entry name" value="DnaJ_CXXCXGXG"/>
    <property type="match status" value="1"/>
</dbReference>
<dbReference type="PRINTS" id="PR00625">
    <property type="entry name" value="JDOMAIN"/>
</dbReference>
<dbReference type="SMART" id="SM00271">
    <property type="entry name" value="DnaJ"/>
    <property type="match status" value="1"/>
</dbReference>
<dbReference type="SUPFAM" id="SSF46565">
    <property type="entry name" value="Chaperone J-domain"/>
    <property type="match status" value="1"/>
</dbReference>
<dbReference type="SUPFAM" id="SSF57938">
    <property type="entry name" value="DnaJ/Hsp40 cysteine-rich domain"/>
    <property type="match status" value="1"/>
</dbReference>
<dbReference type="SUPFAM" id="SSF49493">
    <property type="entry name" value="HSP40/DnaJ peptide-binding domain"/>
    <property type="match status" value="2"/>
</dbReference>
<dbReference type="PROSITE" id="PS50076">
    <property type="entry name" value="DNAJ_2"/>
    <property type="match status" value="1"/>
</dbReference>
<dbReference type="PROSITE" id="PS51188">
    <property type="entry name" value="ZF_CR"/>
    <property type="match status" value="1"/>
</dbReference>
<organism>
    <name type="scientific">Xylella fastidiosa (strain Temecula1 / ATCC 700964)</name>
    <dbReference type="NCBI Taxonomy" id="183190"/>
    <lineage>
        <taxon>Bacteria</taxon>
        <taxon>Pseudomonadati</taxon>
        <taxon>Pseudomonadota</taxon>
        <taxon>Gammaproteobacteria</taxon>
        <taxon>Lysobacterales</taxon>
        <taxon>Lysobacteraceae</taxon>
        <taxon>Xylella</taxon>
    </lineage>
</organism>
<feature type="chain" id="PRO_0000070941" description="Chaperone protein DnaJ">
    <location>
        <begin position="1"/>
        <end position="368"/>
    </location>
</feature>
<feature type="domain" description="J" evidence="1">
    <location>
        <begin position="5"/>
        <end position="70"/>
    </location>
</feature>
<feature type="repeat" description="CXXCXGXG motif">
    <location>
        <begin position="137"/>
        <end position="144"/>
    </location>
</feature>
<feature type="repeat" description="CXXCXGXG motif">
    <location>
        <begin position="153"/>
        <end position="160"/>
    </location>
</feature>
<feature type="repeat" description="CXXCXGXG motif">
    <location>
        <begin position="175"/>
        <end position="182"/>
    </location>
</feature>
<feature type="repeat" description="CXXCXGXG motif">
    <location>
        <begin position="189"/>
        <end position="196"/>
    </location>
</feature>
<feature type="zinc finger region" description="CR-type" evidence="1">
    <location>
        <begin position="124"/>
        <end position="201"/>
    </location>
</feature>
<feature type="binding site" evidence="1">
    <location>
        <position position="137"/>
    </location>
    <ligand>
        <name>Zn(2+)</name>
        <dbReference type="ChEBI" id="CHEBI:29105"/>
        <label>1</label>
    </ligand>
</feature>
<feature type="binding site" evidence="1">
    <location>
        <position position="140"/>
    </location>
    <ligand>
        <name>Zn(2+)</name>
        <dbReference type="ChEBI" id="CHEBI:29105"/>
        <label>1</label>
    </ligand>
</feature>
<feature type="binding site" evidence="1">
    <location>
        <position position="153"/>
    </location>
    <ligand>
        <name>Zn(2+)</name>
        <dbReference type="ChEBI" id="CHEBI:29105"/>
        <label>2</label>
    </ligand>
</feature>
<feature type="binding site" evidence="1">
    <location>
        <position position="156"/>
    </location>
    <ligand>
        <name>Zn(2+)</name>
        <dbReference type="ChEBI" id="CHEBI:29105"/>
        <label>2</label>
    </ligand>
</feature>
<feature type="binding site" evidence="1">
    <location>
        <position position="175"/>
    </location>
    <ligand>
        <name>Zn(2+)</name>
        <dbReference type="ChEBI" id="CHEBI:29105"/>
        <label>2</label>
    </ligand>
</feature>
<feature type="binding site" evidence="1">
    <location>
        <position position="178"/>
    </location>
    <ligand>
        <name>Zn(2+)</name>
        <dbReference type="ChEBI" id="CHEBI:29105"/>
        <label>2</label>
    </ligand>
</feature>
<feature type="binding site" evidence="1">
    <location>
        <position position="189"/>
    </location>
    <ligand>
        <name>Zn(2+)</name>
        <dbReference type="ChEBI" id="CHEBI:29105"/>
        <label>1</label>
    </ligand>
</feature>
<feature type="binding site" evidence="1">
    <location>
        <position position="192"/>
    </location>
    <ligand>
        <name>Zn(2+)</name>
        <dbReference type="ChEBI" id="CHEBI:29105"/>
        <label>1</label>
    </ligand>
</feature>
<sequence>MSKRDYYQVLGVPRTASEDDLKKAYRRCAMKYHPDRNPGDAAAEAAFKECKEAYEVLADTKKRKLYDTHGHAAFEHGVGSGNTPDMNDIFGDIFGNIFGGARASRRGADVGYMVELDLEEAVAGVERQIQIPTLVECTHCHGSGSEDGHVETCGTCRGSGQVRIQRGIFAMQQTCPHCGGRGVIIRNPCKVCNGAGRVEDHKTLSVKIPAGVDNGDRIRLSGEGEQGPDGVPPGDLYVEVRVREHPIFQRDGDDLHCEVPVRISQAALGDIVRVATLDGEAEIRIPAETQSGKLFRLRGKGVRSVRSRTEGDLYCRIVVETPVNLTAEQRKLLEQFEMTFAGEDARKHSPKSATFLDGVKSFWDRMTS</sequence>
<name>DNAJ_XYLFT</name>
<comment type="function">
    <text evidence="1">Participates actively in the response to hyperosmotic and heat shock by preventing the aggregation of stress-denatured proteins and by disaggregating proteins, also in an autonomous, DnaK-independent fashion. Unfolded proteins bind initially to DnaJ; upon interaction with the DnaJ-bound protein, DnaK hydrolyzes its bound ATP, resulting in the formation of a stable complex. GrpE releases ADP from DnaK; ATP binding to DnaK triggers the release of the substrate protein, thus completing the reaction cycle. Several rounds of ATP-dependent interactions between DnaJ, DnaK and GrpE are required for fully efficient folding. Also involved, together with DnaK and GrpE, in the DNA replication of plasmids through activation of initiation proteins.</text>
</comment>
<comment type="cofactor">
    <cofactor evidence="1">
        <name>Zn(2+)</name>
        <dbReference type="ChEBI" id="CHEBI:29105"/>
    </cofactor>
    <text evidence="1">Binds 2 Zn(2+) ions per monomer.</text>
</comment>
<comment type="subunit">
    <text evidence="1">Homodimer.</text>
</comment>
<comment type="subcellular location">
    <subcellularLocation>
        <location evidence="1">Cytoplasm</location>
    </subcellularLocation>
</comment>
<comment type="domain">
    <text evidence="1">The J domain is necessary and sufficient to stimulate DnaK ATPase activity. Zinc center 1 plays an important role in the autonomous, DnaK-independent chaperone activity of DnaJ. Zinc center 2 is essential for interaction with DnaK and for DnaJ activity.</text>
</comment>
<comment type="similarity">
    <text evidence="1">Belongs to the DnaJ family.</text>
</comment>